<dbReference type="EC" id="3.4.24.-" evidence="1"/>
<dbReference type="EMBL" id="CP000828">
    <property type="protein sequence ID" value="ABW28962.1"/>
    <property type="molecule type" value="Genomic_DNA"/>
</dbReference>
<dbReference type="RefSeq" id="WP_012164318.1">
    <property type="nucleotide sequence ID" value="NC_009925.1"/>
</dbReference>
<dbReference type="STRING" id="329726.AM1_3977"/>
<dbReference type="KEGG" id="amr:AM1_3977"/>
<dbReference type="eggNOG" id="COG0501">
    <property type="taxonomic scope" value="Bacteria"/>
</dbReference>
<dbReference type="HOGENOM" id="CLU_042266_3_0_3"/>
<dbReference type="OrthoDB" id="15218at2"/>
<dbReference type="Proteomes" id="UP000000268">
    <property type="component" value="Chromosome"/>
</dbReference>
<dbReference type="GO" id="GO:0005886">
    <property type="term" value="C:plasma membrane"/>
    <property type="evidence" value="ECO:0007669"/>
    <property type="project" value="UniProtKB-SubCell"/>
</dbReference>
<dbReference type="GO" id="GO:0004222">
    <property type="term" value="F:metalloendopeptidase activity"/>
    <property type="evidence" value="ECO:0007669"/>
    <property type="project" value="UniProtKB-UniRule"/>
</dbReference>
<dbReference type="GO" id="GO:0008270">
    <property type="term" value="F:zinc ion binding"/>
    <property type="evidence" value="ECO:0007669"/>
    <property type="project" value="UniProtKB-UniRule"/>
</dbReference>
<dbReference type="GO" id="GO:0006508">
    <property type="term" value="P:proteolysis"/>
    <property type="evidence" value="ECO:0007669"/>
    <property type="project" value="UniProtKB-KW"/>
</dbReference>
<dbReference type="CDD" id="cd07336">
    <property type="entry name" value="M48B_HtpX_like"/>
    <property type="match status" value="1"/>
</dbReference>
<dbReference type="Gene3D" id="3.30.2010.10">
    <property type="entry name" value="Metalloproteases ('zincins'), catalytic domain"/>
    <property type="match status" value="1"/>
</dbReference>
<dbReference type="HAMAP" id="MF_00188">
    <property type="entry name" value="Pept_M48_protease_HtpX"/>
    <property type="match status" value="1"/>
</dbReference>
<dbReference type="InterPro" id="IPR050083">
    <property type="entry name" value="HtpX_protease"/>
</dbReference>
<dbReference type="InterPro" id="IPR022919">
    <property type="entry name" value="Pept_M48_protease_HtpX"/>
</dbReference>
<dbReference type="InterPro" id="IPR001915">
    <property type="entry name" value="Peptidase_M48"/>
</dbReference>
<dbReference type="PANTHER" id="PTHR43221">
    <property type="entry name" value="PROTEASE HTPX"/>
    <property type="match status" value="1"/>
</dbReference>
<dbReference type="PANTHER" id="PTHR43221:SF1">
    <property type="entry name" value="PROTEASE HTPX"/>
    <property type="match status" value="1"/>
</dbReference>
<dbReference type="Pfam" id="PF01435">
    <property type="entry name" value="Peptidase_M48"/>
    <property type="match status" value="1"/>
</dbReference>
<dbReference type="PROSITE" id="PS00142">
    <property type="entry name" value="ZINC_PROTEASE"/>
    <property type="match status" value="1"/>
</dbReference>
<reference key="1">
    <citation type="journal article" date="2008" name="Proc. Natl. Acad. Sci. U.S.A.">
        <title>Niche adaptation and genome expansion in the chlorophyll d-producing cyanobacterium Acaryochloris marina.</title>
        <authorList>
            <person name="Swingley W.D."/>
            <person name="Chen M."/>
            <person name="Cheung P.C."/>
            <person name="Conrad A.L."/>
            <person name="Dejesa L.C."/>
            <person name="Hao J."/>
            <person name="Honchak B.M."/>
            <person name="Karbach L.E."/>
            <person name="Kurdoglu A."/>
            <person name="Lahiri S."/>
            <person name="Mastrian S.D."/>
            <person name="Miyashita H."/>
            <person name="Page L."/>
            <person name="Ramakrishna P."/>
            <person name="Satoh S."/>
            <person name="Sattley W.M."/>
            <person name="Shimada Y."/>
            <person name="Taylor H.L."/>
            <person name="Tomo T."/>
            <person name="Tsuchiya T."/>
            <person name="Wang Z.T."/>
            <person name="Raymond J."/>
            <person name="Mimuro M."/>
            <person name="Blankenship R.E."/>
            <person name="Touchman J.W."/>
        </authorList>
    </citation>
    <scope>NUCLEOTIDE SEQUENCE [LARGE SCALE GENOMIC DNA]</scope>
    <source>
        <strain>MBIC 11017</strain>
    </source>
</reference>
<accession>B0C9E9</accession>
<organism>
    <name type="scientific">Acaryochloris marina (strain MBIC 11017)</name>
    <dbReference type="NCBI Taxonomy" id="329726"/>
    <lineage>
        <taxon>Bacteria</taxon>
        <taxon>Bacillati</taxon>
        <taxon>Cyanobacteriota</taxon>
        <taxon>Cyanophyceae</taxon>
        <taxon>Acaryochloridales</taxon>
        <taxon>Acaryochloridaceae</taxon>
        <taxon>Acaryochloris</taxon>
    </lineage>
</organism>
<sequence length="293" mass="31473">MNQLKTASLLGLLSALLIGSSYALLGGSGGMVMGIGLAALTNLGAWYYSDQIALSAYQAQLVRPNQAPHLYAVVQRLAQRANLPMPRLYIIPSSAANAFATGRDPDHAAIAVTEGLLRMLPAAELEGVLAHELAHIQNRDTLTQAVAATLAGAIAFLAQMVSYSFWFFGSRGNDRESNPIGALLMIVLAPLSATILQLGISRTREFSADETAARLTGQPRALAQALSRLESNAQRNALGGNPAFAPLLIINPPVRQWLSNLFTTHPSTQDRINRLLKLEQQLQRRPSIAFTSL</sequence>
<keyword id="KW-0997">Cell inner membrane</keyword>
<keyword id="KW-1003">Cell membrane</keyword>
<keyword id="KW-0378">Hydrolase</keyword>
<keyword id="KW-0472">Membrane</keyword>
<keyword id="KW-0479">Metal-binding</keyword>
<keyword id="KW-0482">Metalloprotease</keyword>
<keyword id="KW-0645">Protease</keyword>
<keyword id="KW-1185">Reference proteome</keyword>
<keyword id="KW-0812">Transmembrane</keyword>
<keyword id="KW-1133">Transmembrane helix</keyword>
<keyword id="KW-0862">Zinc</keyword>
<protein>
    <recommendedName>
        <fullName evidence="1">Protease HtpX homolog</fullName>
        <ecNumber evidence="1">3.4.24.-</ecNumber>
    </recommendedName>
</protein>
<name>HTPX_ACAM1</name>
<evidence type="ECO:0000255" key="1">
    <source>
        <dbReference type="HAMAP-Rule" id="MF_00188"/>
    </source>
</evidence>
<feature type="chain" id="PRO_1000077440" description="Protease HtpX homolog">
    <location>
        <begin position="1"/>
        <end position="293"/>
    </location>
</feature>
<feature type="transmembrane region" description="Helical" evidence="1">
    <location>
        <begin position="7"/>
        <end position="26"/>
    </location>
</feature>
<feature type="transmembrane region" description="Helical" evidence="1">
    <location>
        <begin position="30"/>
        <end position="49"/>
    </location>
</feature>
<feature type="transmembrane region" description="Helical" evidence="1">
    <location>
        <begin position="148"/>
        <end position="168"/>
    </location>
</feature>
<feature type="transmembrane region" description="Helical" evidence="1">
    <location>
        <begin position="180"/>
        <end position="200"/>
    </location>
</feature>
<feature type="active site" evidence="1">
    <location>
        <position position="132"/>
    </location>
</feature>
<feature type="binding site" evidence="1">
    <location>
        <position position="131"/>
    </location>
    <ligand>
        <name>Zn(2+)</name>
        <dbReference type="ChEBI" id="CHEBI:29105"/>
        <note>catalytic</note>
    </ligand>
</feature>
<feature type="binding site" evidence="1">
    <location>
        <position position="135"/>
    </location>
    <ligand>
        <name>Zn(2+)</name>
        <dbReference type="ChEBI" id="CHEBI:29105"/>
        <note>catalytic</note>
    </ligand>
</feature>
<feature type="binding site" evidence="1">
    <location>
        <position position="205"/>
    </location>
    <ligand>
        <name>Zn(2+)</name>
        <dbReference type="ChEBI" id="CHEBI:29105"/>
        <note>catalytic</note>
    </ligand>
</feature>
<gene>
    <name evidence="1" type="primary">htpX</name>
    <name type="ordered locus">AM1_3977</name>
</gene>
<proteinExistence type="inferred from homology"/>
<comment type="cofactor">
    <cofactor evidence="1">
        <name>Zn(2+)</name>
        <dbReference type="ChEBI" id="CHEBI:29105"/>
    </cofactor>
    <text evidence="1">Binds 1 zinc ion per subunit.</text>
</comment>
<comment type="subcellular location">
    <subcellularLocation>
        <location evidence="1">Cell inner membrane</location>
        <topology evidence="1">Multi-pass membrane protein</topology>
    </subcellularLocation>
</comment>
<comment type="similarity">
    <text evidence="1">Belongs to the peptidase M48B family.</text>
</comment>